<feature type="chain" id="PRO_0000181264" description="Epithelial sodium channel subunit alpha">
    <location>
        <begin position="1"/>
        <end position="698"/>
    </location>
</feature>
<feature type="topological domain" description="Cytoplasmic" evidence="13 14">
    <location>
        <begin position="1"/>
        <end position="110"/>
    </location>
</feature>
<feature type="transmembrane region" description="Helical; Name=1" evidence="3">
    <location>
        <begin position="111"/>
        <end position="131"/>
    </location>
</feature>
<feature type="topological domain" description="Extracellular" evidence="13 14 18">
    <location>
        <begin position="132"/>
        <end position="589"/>
    </location>
</feature>
<feature type="transmembrane region" description="Helical; Name=2" evidence="3">
    <location>
        <begin position="590"/>
        <end position="610"/>
    </location>
</feature>
<feature type="topological domain" description="Cytoplasmic" evidence="13 14">
    <location>
        <begin position="611"/>
        <end position="698"/>
    </location>
</feature>
<feature type="region of interest" description="Disordered" evidence="4">
    <location>
        <begin position="1"/>
        <end position="70"/>
    </location>
</feature>
<feature type="region of interest" description="Gating release of inhibition by proteolysis (GRIP); protease-sensitive region that is responsible for the proteolytic activation of the channel" evidence="1">
    <location>
        <begin position="200"/>
        <end position="270"/>
    </location>
</feature>
<feature type="region of interest" description="Disordered" evidence="4">
    <location>
        <begin position="213"/>
        <end position="243"/>
    </location>
</feature>
<feature type="region of interest" description="Disordered" evidence="4">
    <location>
        <begin position="637"/>
        <end position="663"/>
    </location>
</feature>
<feature type="short sequence motif" description="PY motif; recruits WW domain-containing proteins and is thereby required for ubiquitination and inhibition of the channel by NEDD4 and NEDD4L" evidence="9">
    <location>
        <begin position="669"/>
        <end position="673"/>
    </location>
</feature>
<feature type="compositionally biased region" description="Polar residues" evidence="4">
    <location>
        <begin position="229"/>
        <end position="243"/>
    </location>
</feature>
<feature type="site" description="Cleavage by Furin" evidence="2">
    <location>
        <begin position="205"/>
        <end position="206"/>
    </location>
</feature>
<feature type="site" description="Cleavage by Furin" evidence="2">
    <location>
        <begin position="231"/>
        <end position="232"/>
    </location>
</feature>
<feature type="glycosylation site" description="N-linked (GlcNAc...) asparagine" evidence="13">
    <location>
        <position position="190"/>
    </location>
</feature>
<feature type="glycosylation site" description="N-linked (GlcNAc...) asparagine" evidence="13">
    <location>
        <position position="259"/>
    </location>
</feature>
<feature type="glycosylation site" description="N-linked (GlcNAc...) asparagine" evidence="13">
    <location>
        <position position="320"/>
    </location>
</feature>
<feature type="glycosylation site" description="N-linked (GlcNAc...) asparagine" evidence="13">
    <location>
        <position position="339"/>
    </location>
</feature>
<feature type="glycosylation site" description="N-linked (GlcNAc...) asparagine" evidence="13">
    <location>
        <position position="424"/>
    </location>
</feature>
<feature type="glycosylation site" description="N-linked (GlcNAc...) asparagine" evidence="13">
    <location>
        <position position="538"/>
    </location>
</feature>
<feature type="disulfide bond" evidence="1">
    <location>
        <begin position="158"/>
        <end position="332"/>
    </location>
</feature>
<feature type="disulfide bond" evidence="1">
    <location>
        <begin position="256"/>
        <end position="263"/>
    </location>
</feature>
<feature type="disulfide bond" evidence="1">
    <location>
        <begin position="309"/>
        <end position="316"/>
    </location>
</feature>
<feature type="disulfide bond" evidence="1">
    <location>
        <begin position="421"/>
        <end position="506"/>
    </location>
</feature>
<feature type="disulfide bond" evidence="1">
    <location>
        <begin position="443"/>
        <end position="502"/>
    </location>
</feature>
<feature type="disulfide bond" evidence="1">
    <location>
        <begin position="443"/>
        <end position="483"/>
    </location>
</feature>
<feature type="disulfide bond" evidence="1">
    <location>
        <begin position="447"/>
        <end position="498"/>
    </location>
</feature>
<feature type="disulfide bond" evidence="1">
    <location>
        <begin position="456"/>
        <end position="506"/>
    </location>
</feature>
<feature type="disulfide bond" evidence="1">
    <location>
        <begin position="456"/>
        <end position="483"/>
    </location>
</feature>
<feature type="disulfide bond" evidence="1">
    <location>
        <begin position="458"/>
        <end position="472"/>
    </location>
</feature>
<feature type="mutagenesis site" description="Changes function of the channel including conductance, gating, selectivity and voltage dependence." evidence="12">
    <original>S</original>
    <variation>I</variation>
    <location>
        <position position="588"/>
    </location>
</feature>
<feature type="mutagenesis site" description="Changes function of the channel including conductance, gating, selectivity and voltage dependence." evidence="12">
    <original>S</original>
    <variation>T</variation>
    <location>
        <position position="592"/>
    </location>
</feature>
<feature type="sequence conflict" description="In Ref. 2; CAA49905." evidence="23" ref="2">
    <original>EL</original>
    <variation>DV</variation>
    <location>
        <begin position="598"/>
        <end position="599"/>
    </location>
</feature>
<name>SCNNA_RAT</name>
<keyword id="KW-1003">Cell membrane</keyword>
<keyword id="KW-0966">Cell projection</keyword>
<keyword id="KW-0969">Cilium</keyword>
<keyword id="KW-0963">Cytoplasm</keyword>
<keyword id="KW-0968">Cytoplasmic vesicle</keyword>
<keyword id="KW-1015">Disulfide bond</keyword>
<keyword id="KW-0282">Flagellum</keyword>
<keyword id="KW-0325">Glycoprotein</keyword>
<keyword id="KW-0407">Ion channel</keyword>
<keyword id="KW-0406">Ion transport</keyword>
<keyword id="KW-0472">Membrane</keyword>
<keyword id="KW-1185">Reference proteome</keyword>
<keyword id="KW-0915">Sodium</keyword>
<keyword id="KW-0894">Sodium channel</keyword>
<keyword id="KW-0739">Sodium transport</keyword>
<keyword id="KW-0812">Transmembrane</keyword>
<keyword id="KW-1133">Transmembrane helix</keyword>
<keyword id="KW-0813">Transport</keyword>
<keyword id="KW-0832">Ubl conjugation</keyword>
<dbReference type="EMBL" id="X70521">
    <property type="protein sequence ID" value="CAA49916.1"/>
    <property type="status" value="ALT_INIT"/>
    <property type="molecule type" value="mRNA"/>
</dbReference>
<dbReference type="EMBL" id="X70497">
    <property type="protein sequence ID" value="CAA49905.1"/>
    <property type="molecule type" value="mRNA"/>
</dbReference>
<dbReference type="EMBL" id="U54699">
    <property type="protein sequence ID" value="AAB61156.1"/>
    <property type="molecule type" value="mRNA"/>
</dbReference>
<dbReference type="EMBL" id="U54700">
    <property type="protein sequence ID" value="AAB61157.1"/>
    <property type="molecule type" value="mRNA"/>
</dbReference>
<dbReference type="EMBL" id="AF081783">
    <property type="protein sequence ID" value="AAD16017.1"/>
    <property type="molecule type" value="Genomic_DNA"/>
</dbReference>
<dbReference type="EMBL" id="AF082073">
    <property type="protein sequence ID" value="AAD16026.1"/>
    <property type="molecule type" value="mRNA"/>
</dbReference>
<dbReference type="PIR" id="S29499">
    <property type="entry name" value="S29499"/>
</dbReference>
<dbReference type="RefSeq" id="NP_113736.1">
    <property type="nucleotide sequence ID" value="NM_031548.2"/>
</dbReference>
<dbReference type="SMR" id="P37089"/>
<dbReference type="BioGRID" id="247193">
    <property type="interactions" value="2"/>
</dbReference>
<dbReference type="ComplexPortal" id="CPX-314">
    <property type="entry name" value="Amiloride-sensitive sodium channel complex, alpha-beta-gamma"/>
</dbReference>
<dbReference type="DIP" id="DIP-61308N"/>
<dbReference type="FunCoup" id="P37089">
    <property type="interactions" value="104"/>
</dbReference>
<dbReference type="IntAct" id="P37089">
    <property type="interactions" value="3"/>
</dbReference>
<dbReference type="STRING" id="10116.ENSRNOP00000061813"/>
<dbReference type="GlyCosmos" id="P37089">
    <property type="glycosylation" value="6 sites, No reported glycans"/>
</dbReference>
<dbReference type="GlyGen" id="P37089">
    <property type="glycosylation" value="6 sites"/>
</dbReference>
<dbReference type="iPTMnet" id="P37089"/>
<dbReference type="PhosphoSitePlus" id="P37089"/>
<dbReference type="PaxDb" id="10116-ENSRNOP00000061813"/>
<dbReference type="GeneID" id="25122"/>
<dbReference type="KEGG" id="rno:25122"/>
<dbReference type="UCSC" id="RGD:3639">
    <property type="organism name" value="rat"/>
</dbReference>
<dbReference type="AGR" id="RGD:3639"/>
<dbReference type="CTD" id="6337"/>
<dbReference type="RGD" id="3639">
    <property type="gene designation" value="Scnn1a"/>
</dbReference>
<dbReference type="eggNOG" id="KOG4294">
    <property type="taxonomic scope" value="Eukaryota"/>
</dbReference>
<dbReference type="InParanoid" id="P37089"/>
<dbReference type="OMA" id="MRQCKQE"/>
<dbReference type="OrthoDB" id="6238402at2759"/>
<dbReference type="PhylomeDB" id="P37089"/>
<dbReference type="Reactome" id="R-RNO-2672351">
    <property type="pathway name" value="Stimuli-sensing channels"/>
</dbReference>
<dbReference type="Reactome" id="R-RNO-9730628">
    <property type="pathway name" value="Sensory perception of salty taste"/>
</dbReference>
<dbReference type="PRO" id="PR:P37089"/>
<dbReference type="Proteomes" id="UP000002494">
    <property type="component" value="Unplaced"/>
</dbReference>
<dbReference type="GO" id="GO:0001669">
    <property type="term" value="C:acrosomal vesicle"/>
    <property type="evidence" value="ECO:0000314"/>
    <property type="project" value="UniProtKB"/>
</dbReference>
<dbReference type="GO" id="GO:0016324">
    <property type="term" value="C:apical plasma membrane"/>
    <property type="evidence" value="ECO:0000314"/>
    <property type="project" value="UniProtKB"/>
</dbReference>
<dbReference type="GO" id="GO:0060170">
    <property type="term" value="C:ciliary membrane"/>
    <property type="evidence" value="ECO:0000250"/>
    <property type="project" value="UniProtKB"/>
</dbReference>
<dbReference type="GO" id="GO:0030864">
    <property type="term" value="C:cortical actin cytoskeleton"/>
    <property type="evidence" value="ECO:0000314"/>
    <property type="project" value="RGD"/>
</dbReference>
<dbReference type="GO" id="GO:0005737">
    <property type="term" value="C:cytoplasm"/>
    <property type="evidence" value="ECO:0000314"/>
    <property type="project" value="UniProtKB"/>
</dbReference>
<dbReference type="GO" id="GO:0005829">
    <property type="term" value="C:cytosol"/>
    <property type="evidence" value="ECO:0000266"/>
    <property type="project" value="RGD"/>
</dbReference>
<dbReference type="GO" id="GO:0009897">
    <property type="term" value="C:external side of plasma membrane"/>
    <property type="evidence" value="ECO:0000266"/>
    <property type="project" value="RGD"/>
</dbReference>
<dbReference type="GO" id="GO:0070062">
    <property type="term" value="C:extracellular exosome"/>
    <property type="evidence" value="ECO:0000266"/>
    <property type="project" value="RGD"/>
</dbReference>
<dbReference type="GO" id="GO:0016020">
    <property type="term" value="C:membrane"/>
    <property type="evidence" value="ECO:0000266"/>
    <property type="project" value="RGD"/>
</dbReference>
<dbReference type="GO" id="GO:0031514">
    <property type="term" value="C:motile cilium"/>
    <property type="evidence" value="ECO:0000250"/>
    <property type="project" value="UniProtKB"/>
</dbReference>
<dbReference type="GO" id="GO:0005886">
    <property type="term" value="C:plasma membrane"/>
    <property type="evidence" value="ECO:0000250"/>
    <property type="project" value="UniProtKB"/>
</dbReference>
<dbReference type="GO" id="GO:0034706">
    <property type="term" value="C:sodium channel complex"/>
    <property type="evidence" value="ECO:0000353"/>
    <property type="project" value="ComplexPortal"/>
</dbReference>
<dbReference type="GO" id="GO:0097228">
    <property type="term" value="C:sperm principal piece"/>
    <property type="evidence" value="ECO:0000314"/>
    <property type="project" value="UniProtKB"/>
</dbReference>
<dbReference type="GO" id="GO:0003779">
    <property type="term" value="F:actin binding"/>
    <property type="evidence" value="ECO:0000314"/>
    <property type="project" value="RGD"/>
</dbReference>
<dbReference type="GO" id="GO:0015280">
    <property type="term" value="F:ligand-gated sodium channel activity"/>
    <property type="evidence" value="ECO:0000314"/>
    <property type="project" value="RGD"/>
</dbReference>
<dbReference type="GO" id="GO:0050699">
    <property type="term" value="F:WW domain binding"/>
    <property type="evidence" value="ECO:0000353"/>
    <property type="project" value="RGD"/>
</dbReference>
<dbReference type="GO" id="GO:0071468">
    <property type="term" value="P:cellular response to acidic pH"/>
    <property type="evidence" value="ECO:0000266"/>
    <property type="project" value="RGD"/>
</dbReference>
<dbReference type="GO" id="GO:1904045">
    <property type="term" value="P:cellular response to aldosterone"/>
    <property type="evidence" value="ECO:0000266"/>
    <property type="project" value="RGD"/>
</dbReference>
<dbReference type="GO" id="GO:1904117">
    <property type="term" value="P:cellular response to vasopressin"/>
    <property type="evidence" value="ECO:0000303"/>
    <property type="project" value="ComplexPortal"/>
</dbReference>
<dbReference type="GO" id="GO:0006883">
    <property type="term" value="P:intracellular sodium ion homeostasis"/>
    <property type="evidence" value="ECO:0000314"/>
    <property type="project" value="ComplexPortal"/>
</dbReference>
<dbReference type="GO" id="GO:0050891">
    <property type="term" value="P:multicellular organismal-level water homeostasis"/>
    <property type="evidence" value="ECO:0000250"/>
    <property type="project" value="UniProtKB"/>
</dbReference>
<dbReference type="GO" id="GO:0008217">
    <property type="term" value="P:regulation of blood pressure"/>
    <property type="evidence" value="ECO:0000304"/>
    <property type="project" value="RGD"/>
</dbReference>
<dbReference type="GO" id="GO:0050878">
    <property type="term" value="P:regulation of body fluid levels"/>
    <property type="evidence" value="ECO:0000315"/>
    <property type="project" value="RGD"/>
</dbReference>
<dbReference type="GO" id="GO:0050914">
    <property type="term" value="P:sensory perception of salty taste"/>
    <property type="evidence" value="ECO:0000303"/>
    <property type="project" value="ComplexPortal"/>
</dbReference>
<dbReference type="GO" id="GO:0050915">
    <property type="term" value="P:sensory perception of sour taste"/>
    <property type="evidence" value="ECO:0000303"/>
    <property type="project" value="ComplexPortal"/>
</dbReference>
<dbReference type="GO" id="GO:0055078">
    <property type="term" value="P:sodium ion homeostasis"/>
    <property type="evidence" value="ECO:0000250"/>
    <property type="project" value="UniProtKB"/>
</dbReference>
<dbReference type="GO" id="GO:0098719">
    <property type="term" value="P:sodium ion import across plasma membrane"/>
    <property type="evidence" value="ECO:0000314"/>
    <property type="project" value="RGD"/>
</dbReference>
<dbReference type="GO" id="GO:0035725">
    <property type="term" value="P:sodium ion transmembrane transport"/>
    <property type="evidence" value="ECO:0000250"/>
    <property type="project" value="UniProtKB"/>
</dbReference>
<dbReference type="GO" id="GO:0006814">
    <property type="term" value="P:sodium ion transport"/>
    <property type="evidence" value="ECO:0000314"/>
    <property type="project" value="RGD"/>
</dbReference>
<dbReference type="FunFam" id="2.60.470.10:FF:000002">
    <property type="entry name" value="Amiloride-sensitive sodium channel subunit alpha"/>
    <property type="match status" value="1"/>
</dbReference>
<dbReference type="FunFam" id="1.10.287.770:FF:000002">
    <property type="entry name" value="Amiloride-sensitive sodium channel subunit beta 1"/>
    <property type="match status" value="1"/>
</dbReference>
<dbReference type="Gene3D" id="2.60.470.10">
    <property type="entry name" value="Acid-sensing ion channels like domains"/>
    <property type="match status" value="1"/>
</dbReference>
<dbReference type="Gene3D" id="1.10.287.770">
    <property type="entry name" value="YojJ-like"/>
    <property type="match status" value="1"/>
</dbReference>
<dbReference type="InterPro" id="IPR001873">
    <property type="entry name" value="ENaC"/>
</dbReference>
<dbReference type="InterPro" id="IPR004724">
    <property type="entry name" value="ENaC_chordates"/>
</dbReference>
<dbReference type="InterPro" id="IPR020903">
    <property type="entry name" value="ENaC_CS"/>
</dbReference>
<dbReference type="NCBIfam" id="TIGR00859">
    <property type="entry name" value="ENaC"/>
    <property type="match status" value="1"/>
</dbReference>
<dbReference type="PANTHER" id="PTHR11690:SF124">
    <property type="entry name" value="AMILORIDE-SENSITIVE SODIUM CHANNEL SUBUNIT ALPHA"/>
    <property type="match status" value="1"/>
</dbReference>
<dbReference type="PANTHER" id="PTHR11690">
    <property type="entry name" value="AMILORIDE-SENSITIVE SODIUM CHANNEL-RELATED"/>
    <property type="match status" value="1"/>
</dbReference>
<dbReference type="Pfam" id="PF00858">
    <property type="entry name" value="ASC"/>
    <property type="match status" value="1"/>
</dbReference>
<dbReference type="PRINTS" id="PR01078">
    <property type="entry name" value="AMINACHANNEL"/>
</dbReference>
<dbReference type="PROSITE" id="PS01206">
    <property type="entry name" value="ASC"/>
    <property type="match status" value="1"/>
</dbReference>
<gene>
    <name evidence="25" type="primary">Scnn1a</name>
    <name evidence="22" type="synonym">RCNaCh</name>
    <name evidence="20" type="synonym">RCNaCh1</name>
    <name evidence="21" type="synonym">Renac</name>
</gene>
<protein>
    <recommendedName>
        <fullName evidence="24">Epithelial sodium channel subunit alpha</fullName>
        <shortName>Alpha-ENaC</shortName>
        <shortName>Epithelial Na(+) channel subunit alpha</shortName>
    </recommendedName>
    <alternativeName>
        <fullName>Alpha-NaCH</fullName>
    </alternativeName>
    <alternativeName>
        <fullName evidence="24">Amiloride-sensitive sodium channel subunit alpha</fullName>
    </alternativeName>
    <alternativeName>
        <fullName>Nonvoltage-gated sodium channel 1 subunit alpha</fullName>
    </alternativeName>
    <alternativeName>
        <fullName>SCNEA</fullName>
    </alternativeName>
</protein>
<sequence length="698" mass="78888">MLDHTRAPELNIDLDLHASNSPKGSMKGNQFKEQDPCPPQPMQGLGKGDKREEQGLGPEPSAPRQPTEEEEALIEFHRSYRELFQFFCNNTTIHGAIRLVCSKHNRMKTAFWAVLWLCTFGMMYWQFALLFEEYLSYPVSLNINLNSDKLVFPAVTVCTLNPYRYTEIKEELEELDRITEQTLFDLYKYNSSYTRQAGARRRSSRDLLGAFPHPLQRLRTPPPPYSGRTARSGSSSVRDNNPQVDRKDWKIGFQLCNQNKSDCFYQTYSSGVDAVREWYRFHYINILSRLSDTSPALEEEALGNFIFTCRFNQAPCNQANYSKFHHPMYGNCYTFNDKNNSNLWMSSMPGVNNGLSLTLRTEQNDFIPLLSTVTGARVMVHGQDEPAFMDDGGFNLRPGVETSISMRKEALDSLGGNYGDCTENGSDVPVKNLYPSKYTQQVCIHSCFQENMIKKCGCAYIFYPKPKGVEFCDYRKQSSWGYCYYKLQGAFSLDSLGCFSKCRKPCSVINYKLSAGYSRWPSVKSQDWIFEMLSLQNNYTINNKRNGVAKLNIFFKELNYKTNSESPSVTMVSLLSNLGSQWSLWFGSSVLSVVEMAELIFDLLVITLLMLLRRFRSRYWSPGRGARGAREVASTPASSFPSRFCPHPTSPPPSLPQQGMTPPLALTAPPPAYATLGPSAPPLDSAAPDCSACALAAL</sequence>
<organism>
    <name type="scientific">Rattus norvegicus</name>
    <name type="common">Rat</name>
    <dbReference type="NCBI Taxonomy" id="10116"/>
    <lineage>
        <taxon>Eukaryota</taxon>
        <taxon>Metazoa</taxon>
        <taxon>Chordata</taxon>
        <taxon>Craniata</taxon>
        <taxon>Vertebrata</taxon>
        <taxon>Euteleostomi</taxon>
        <taxon>Mammalia</taxon>
        <taxon>Eutheria</taxon>
        <taxon>Euarchontoglires</taxon>
        <taxon>Glires</taxon>
        <taxon>Rodentia</taxon>
        <taxon>Myomorpha</taxon>
        <taxon>Muroidea</taxon>
        <taxon>Muridae</taxon>
        <taxon>Murinae</taxon>
        <taxon>Rattus</taxon>
    </lineage>
</organism>
<proteinExistence type="evidence at protein level"/>
<reference key="1">
    <citation type="journal article" date="1993" name="FEBS Lett.">
        <title>Expression cloning of an epithelial amiloride-sensitive Na+ channel. A new channel type with homologies to Caenorhabditis elegans degenerins.</title>
        <authorList>
            <person name="Lingueglia E."/>
            <person name="Voilley N."/>
            <person name="Waldmann R."/>
            <person name="Lazdunski M."/>
            <person name="Barbry P."/>
        </authorList>
    </citation>
    <scope>NUCLEOTIDE SEQUENCE [MRNA]</scope>
    <scope>FUNCTION</scope>
    <scope>TRANSPORTER ACTIVITY</scope>
    <scope>ACTIVITY REGULATION</scope>
    <source>
        <strain>Wistar</strain>
        <tissue>Distal colon</tissue>
    </source>
</reference>
<reference key="2">
    <citation type="journal article" date="1993" name="Nature">
        <title>Epithelial sodium channel related to proteins involved in neurodegeneration.</title>
        <authorList>
            <person name="Canessa C.M."/>
            <person name="Horisberger J.-D."/>
            <person name="Rossier B.C."/>
        </authorList>
    </citation>
    <scope>NUCLEOTIDE SEQUENCE [MRNA]</scope>
    <source>
        <strain>Sprague-Dawley</strain>
        <tissue>Colon epithelium</tissue>
    </source>
</reference>
<reference key="3">
    <citation type="journal article" date="1997" name="Hypertension">
        <title>Role of the alpha-, beta-, and gamma-subunits of epithelial sodium channel in a model of polygenic hypertension.</title>
        <authorList>
            <person name="Kreutz R."/>
            <person name="Struk B."/>
            <person name="Rubattu S."/>
            <person name="Hubner N."/>
            <person name="Szpirer J."/>
            <person name="Szpirer C."/>
            <person name="Ganten D."/>
            <person name="Lindpaintner K."/>
        </authorList>
    </citation>
    <scope>NUCLEOTIDE SEQUENCE [MRNA]</scope>
    <source>
        <strain>SHRSP</strain>
        <strain>Wistar Kyoto</strain>
        <tissue>Kidney</tissue>
    </source>
</reference>
<reference key="4">
    <citation type="journal article" date="1999" name="Am. J. Respir. Cell Mol. Biol.">
        <title>Structure and hormone responsiveness of the gene encoding the alpha-subunit of the rat amiloride-sensitive epithelial sodium channel.</title>
        <authorList>
            <person name="Otulakowski G."/>
            <person name="Rafii B."/>
            <person name="Bremner H.R."/>
            <person name="O'Brodovich H."/>
        </authorList>
    </citation>
    <scope>NUCLEOTIDE SEQUENCE [MRNA] OF 1-76</scope>
    <source>
        <strain>Wistar</strain>
    </source>
</reference>
<reference key="5">
    <citation type="journal article" date="1994" name="J. Biol. Chem.">
        <title>Different homologous subunits of the amiloride-sensitive Na+ channel are differently regulated by aldosterone.</title>
        <authorList>
            <person name="Lingueglia R."/>
            <person name="Renard S."/>
            <person name="Waldmann R."/>
            <person name="Voilley N."/>
            <person name="Champigny G."/>
            <person name="Plass H."/>
            <person name="Lazdunski M."/>
            <person name="Barbry P."/>
        </authorList>
    </citation>
    <scope>FUNCTION</scope>
    <scope>TRANSPORTER ACTIVITY</scope>
    <scope>ACTIVITY REGULATION</scope>
    <scope>SUBUNIT</scope>
    <scope>SUBCELLULAR LOCATION</scope>
</reference>
<reference key="6">
    <citation type="journal article" date="1994" name="J. Biol. Chem.">
        <title>Membrane topology of the amiloride-sensitive epithelial sodium channel.</title>
        <authorList>
            <person name="Snyder P.M."/>
            <person name="McDonald F.J."/>
            <person name="Stokes J.B."/>
            <person name="Welsh M.J."/>
        </authorList>
    </citation>
    <scope>TOPOLOGY</scope>
    <scope>GLYCOSYLATION AT ASN-190; ASN-259; ASN-320; ASN-339; ASN-424 AND ASN-538</scope>
</reference>
<reference key="7">
    <citation type="journal article" date="1994" name="J. Biol. Chem.">
        <title>Biochemical analysis of the membrane topology of the amiloride-sensitive Na+ channel.</title>
        <authorList>
            <person name="Renard S."/>
            <person name="Lingueglia E."/>
            <person name="Voilley N."/>
            <person name="Lazdunski M."/>
            <person name="Barbry P."/>
        </authorList>
    </citation>
    <scope>TOPOLOGY</scope>
</reference>
<reference key="8">
    <citation type="journal article" date="1995" name="J. Biol. Chem.">
        <title>Functional degenerin-containing chimeras identify residues essential for amiloride-sensitive Na+ channel function.</title>
        <authorList>
            <person name="Waldmann R."/>
            <person name="Champigny G."/>
            <person name="Lazdunski M."/>
        </authorList>
    </citation>
    <scope>MUTAGENESIS OF SER-588 AND SER-592</scope>
</reference>
<reference key="9">
    <citation type="journal article" date="1996" name="EMBO J.">
        <title>WW domains of Nedd4 bind to the proline-rich PY motifs in the epithelial Na+ channel deleted in Liddle's syndrome.</title>
        <authorList>
            <person name="Staub O."/>
            <person name="Dho S."/>
            <person name="Henry P."/>
            <person name="Correa J."/>
            <person name="Ishikawa T."/>
            <person name="McGlade J."/>
            <person name="Rotin D."/>
        </authorList>
    </citation>
    <scope>UBIQUITINATION BY NEDD4</scope>
</reference>
<reference key="10">
    <citation type="journal article" date="1997" name="EMBO J.">
        <title>A mutation causing pseudohypoaldosteronism type 1 identifies a conserved glycine that is involved in the gating of the epithelial sodium channel.</title>
        <authorList>
            <person name="Gruender S."/>
            <person name="Firsov D."/>
            <person name="Chang S.S."/>
            <person name="Jaeger N.F."/>
            <person name="Gautschi I."/>
            <person name="Schild L."/>
            <person name="Lifton R.P."/>
            <person name="Rossier B.C."/>
        </authorList>
    </citation>
    <scope>FUNCTION</scope>
    <scope>TRANSPORTER ACTIVITY</scope>
    <scope>ACTIVITY REGULATION</scope>
    <scope>INTERACTION WITH SCNN1B AND SCNN1G</scope>
    <scope>SUBCELLULAR LOCATION</scope>
    <scope>TOPOLOGY</scope>
</reference>
<reference key="11">
    <citation type="journal article" date="1997" name="EMBO J.">
        <title>Regulation of stability and function of the epithelial Na+ channel (ENaC) by ubiquitination.</title>
        <authorList>
            <person name="Staub O."/>
            <person name="Gautschi I."/>
            <person name="Ishikawa T."/>
            <person name="Breitschopf K."/>
            <person name="Ciechanover A."/>
            <person name="Schild L."/>
            <person name="Rotin D."/>
        </authorList>
    </citation>
    <scope>UBIQUITINATION</scope>
</reference>
<reference key="12">
    <citation type="journal article" date="2001" name="Am. J. Physiol.">
        <title>Immunocytochemical and immunoelectron microscopic localization of alpha-, beta-, and gamma-ENaC in rat kidney.</title>
        <authorList>
            <person name="Hager H."/>
            <person name="Kwon T.H."/>
            <person name="Vinnikova A.K."/>
            <person name="Masilamani S."/>
            <person name="Brooks H.L."/>
            <person name="Frokiaer J."/>
            <person name="Knepper M.A."/>
            <person name="Nielsen S."/>
        </authorList>
    </citation>
    <scope>SUBCELLULAR LOCATION</scope>
</reference>
<reference key="13">
    <citation type="journal article" date="2001" name="Nat. Struct. Biol.">
        <title>Solution structure of a Nedd4 WW domain-ENaC peptide complex.</title>
        <authorList>
            <person name="Kanelis V."/>
            <person name="Rotin D."/>
            <person name="Forman-Kay J.D."/>
        </authorList>
    </citation>
    <scope>UBIQUITINATION BY NEDD4</scope>
</reference>
<reference key="14">
    <citation type="journal article" date="2002" name="J. Biol. Chem.">
        <title>Trafficking and cell surface stability of the epithelial Na+ channel expressed in epithelial Madin-Darby canine kidney cells.</title>
        <authorList>
            <person name="Hanwell D."/>
            <person name="Ishikawa T."/>
            <person name="Saleki R."/>
            <person name="Rotin D."/>
        </authorList>
    </citation>
    <scope>SUBCELLULAR LOCATION</scope>
    <scope>GLYCOSYLATION</scope>
</reference>
<reference key="15">
    <citation type="journal article" date="2003" name="C. R. Biol.">
        <title>Identification of new partners of the epithelial sodium channel alpha subunit.</title>
        <authorList>
            <person name="Malbert-Colas L."/>
            <person name="Nicolas G."/>
            <person name="Galand C."/>
            <person name="Lecomte M.-C."/>
            <person name="Dhermy D."/>
        </authorList>
    </citation>
    <scope>UBIQUITINATION BY NEDD4L</scope>
</reference>
<reference key="16">
    <citation type="journal article" date="2003" name="FASEB J.">
        <title>The role of individual Nedd4-2 (KIAA0439) WW domains in binding and regulating epithelial sodium channels.</title>
        <authorList>
            <person name="Fotia A.B."/>
            <person name="Dinudom A."/>
            <person name="Shearwin K.E."/>
            <person name="Koch J.-P."/>
            <person name="Korbmacher C."/>
            <person name="Cook D.I."/>
            <person name="Kumar S."/>
        </authorList>
    </citation>
    <scope>UBIQUITINATION</scope>
</reference>
<reference key="17">
    <citation type="journal article" date="2003" name="J. Biol. Chem.">
        <title>Affinity and specificity of interactions between Nedd4 isoforms and ENaC.</title>
        <authorList>
            <person name="Henry P.C."/>
            <person name="Kanelis V."/>
            <person name="O'Brien C.M."/>
            <person name="Kim B."/>
            <person name="Gautschi I."/>
            <person name="Forman-Kay J.D."/>
            <person name="Schild L."/>
            <person name="Rotin D."/>
        </authorList>
    </citation>
    <scope>UBIQUITINATION BY NEDD4 AND NEDD4L</scope>
    <scope>MOTIF</scope>
</reference>
<reference key="18">
    <citation type="journal article" date="2018" name="J. Mol. Histol.">
        <title>Localization of epithelial sodium channel (ENaC) and CFTR in the germinal epithelium of the testis, Sertoli cells, and spermatozoa.</title>
        <authorList>
            <person name="Sharma S."/>
            <person name="Hanukoglu A."/>
            <person name="Hanukoglu I."/>
        </authorList>
    </citation>
    <scope>SUBCELLULAR LOCATION</scope>
    <scope>TISSUE SPECIFICITY</scope>
</reference>
<accession>P37089</accession>
<accession>Q64593</accession>
<accession>Q9QUI4</accession>
<evidence type="ECO:0000250" key="1">
    <source>
        <dbReference type="UniProtKB" id="P37088"/>
    </source>
</evidence>
<evidence type="ECO:0000250" key="2">
    <source>
        <dbReference type="UniProtKB" id="Q61180"/>
    </source>
</evidence>
<evidence type="ECO:0000255" key="3"/>
<evidence type="ECO:0000256" key="4">
    <source>
        <dbReference type="SAM" id="MobiDB-lite"/>
    </source>
</evidence>
<evidence type="ECO:0000269" key="5">
    <source>
    </source>
</evidence>
<evidence type="ECO:0000269" key="6">
    <source>
    </source>
</evidence>
<evidence type="ECO:0000269" key="7">
    <source>
    </source>
</evidence>
<evidence type="ECO:0000269" key="8">
    <source>
    </source>
</evidence>
<evidence type="ECO:0000269" key="9">
    <source>
    </source>
</evidence>
<evidence type="ECO:0000269" key="10">
    <source>
    </source>
</evidence>
<evidence type="ECO:0000269" key="11">
    <source>
    </source>
</evidence>
<evidence type="ECO:0000269" key="12">
    <source>
    </source>
</evidence>
<evidence type="ECO:0000269" key="13">
    <source>
    </source>
</evidence>
<evidence type="ECO:0000269" key="14">
    <source>
    </source>
</evidence>
<evidence type="ECO:0000269" key="15">
    <source>
    </source>
</evidence>
<evidence type="ECO:0000269" key="16">
    <source>
    </source>
</evidence>
<evidence type="ECO:0000269" key="17">
    <source>
    </source>
</evidence>
<evidence type="ECO:0000269" key="18">
    <source>
    </source>
</evidence>
<evidence type="ECO:0000269" key="19">
    <source>
    </source>
</evidence>
<evidence type="ECO:0000303" key="20">
    <source>
    </source>
</evidence>
<evidence type="ECO:0000303" key="21">
    <source>
    </source>
</evidence>
<evidence type="ECO:0000303" key="22">
    <source>
    </source>
</evidence>
<evidence type="ECO:0000305" key="23"/>
<evidence type="ECO:0000305" key="24">
    <source>
    </source>
</evidence>
<evidence type="ECO:0000312" key="25">
    <source>
        <dbReference type="RGD" id="3639"/>
    </source>
</evidence>
<comment type="function">
    <text evidence="1 16 18">This is one of the three pore-forming subunits of the heterotrimeric epithelial sodium channel (ENaC), a critical regulator of sodium balance and fluid homeostasis (PubMed:8188647, PubMed:9118951). ENaC operates in epithelial tissues, where it mediates the electrodiffusion of sodium ions from extracellular fluid through the apical membrane of cells, with water following osmotically (PubMed:8382172, PubMed:9118951). It plays a key role in maintaining sodium homeostasis through electrogenic sodium reabsorption in the kidneys. Additionally, ENaC is essential for airway surface liquid homeostasis, which is crucial for proper mucus clearance (By similarity).</text>
</comment>
<comment type="catalytic activity">
    <reaction evidence="15 16 18">
        <text>Na(+)(in) = Na(+)(out)</text>
        <dbReference type="Rhea" id="RHEA:34963"/>
        <dbReference type="ChEBI" id="CHEBI:29101"/>
    </reaction>
</comment>
<comment type="activity regulation">
    <text evidence="15 16 18">Originally identified and characterized by its inhibition by the diuretic drug amiloride.</text>
</comment>
<comment type="subunit">
    <text evidence="1 18">Heterotrimer; containing an alpha/SCNN1A, a beta/SCNN1B and a gamma/SCNN1G subunit (PubMed:8188647, PubMed:9118951). Interacts with WWP1 (via WW domains). Interacts with WWP2 (via WW domains); inhibits the channel. Interacts with BPIFA1; the interaction is indirect via SCNN1B and inhibits the proteolytic processing of SCNN1A and SCNN1G and the activation of ENaC (By similarity). Interacts with the full-length immature form of PCSK9 (pro-PCSK9) (By similarity).</text>
</comment>
<comment type="subcellular location">
    <subcellularLocation>
        <location evidence="6 7 15 18">Apical cell membrane</location>
        <topology evidence="13 14">Multi-pass membrane protein</topology>
    </subcellularLocation>
    <subcellularLocation>
        <location evidence="1">Cell projection</location>
        <location evidence="1">Cilium</location>
    </subcellularLocation>
    <subcellularLocation>
        <location evidence="1">Cytoplasmic granule</location>
    </subcellularLocation>
    <subcellularLocation>
        <location evidence="11">Cytoplasm</location>
    </subcellularLocation>
    <subcellularLocation>
        <location evidence="11">Cytoplasmic vesicle</location>
        <location evidence="11">Secretory vesicle</location>
        <location evidence="11">Acrosome</location>
    </subcellularLocation>
    <subcellularLocation>
        <location evidence="11">Cell projection</location>
        <location evidence="11">Cilium</location>
        <location evidence="11">Flagellum</location>
    </subcellularLocation>
    <text evidence="1 7 11">In multi-ciliated cells, located on cilia. In non-ciliated epithelial cells, restricted to apical surfaces. In epidermis, located nearly uniformly in the cytoplasm in a granular distribution. In sebaceous glands, observed only in the cytoplasmic space in between the lipid vesicles. In eccrine sweat glands, mainly located at the apical surface of the cells facing the lumen (By similarity). In skin, in arrector pili muscle cells and in adipocytes, located in the cytoplasm and colocalized with actin fibers (By similarity). In spermatogonia, spermatocytes and round spermatids, located in the cytoplasm (PubMed:29453757). Prior to spermiation, location shifts from the cytoplasm to the spermatid tail (PubMed:29453757). In spermatozoa, localizes at the acrosome and the central region of the sperm flagellum (PubMed:29453757).</text>
</comment>
<comment type="tissue specificity">
    <text evidence="11">Detected in kidney, lung and testis (at protein level). In the testis, detected within the seminiferous tubules but not in the interstitial cells (at protein level).</text>
</comment>
<comment type="PTM">
    <text evidence="5 8 9 10 17 19">Ubiquitinated. Can be ubiquitinated at multiple sites and undergo monoubiquitination and polyubiquitination. Ubiquitination by NEDD4 or NEDD4L inhibits the ENaC channel through endocytosis, intracellular retention and degradation of its individual subunits.</text>
</comment>
<comment type="PTM">
    <text evidence="7">N-glycosylated.</text>
</comment>
<comment type="PTM">
    <text evidence="1 2">ENaC is activated through the proteolytic maturation of its subunits. Furin cleaves the SCNN1A subunit, which results in a stepwise increase in the open probability of the channel due to the release of an inhibitory tract (By similarity). BPIFA1, which is recruited by the SCNN1B subunit, prevents the proteolytic activation of ENaC (By similarity).</text>
</comment>
<comment type="similarity">
    <text evidence="23">Belongs to the amiloride-sensitive sodium channel (TC 1.A.6) family. SCNN1A subfamily.</text>
</comment>
<comment type="sequence caution" evidence="23">
    <conflict type="erroneous initiation">
        <sequence resource="EMBL-CDS" id="CAA49916"/>
    </conflict>
    <text>Extended N-terminus.</text>
</comment>